<protein>
    <recommendedName>
        <fullName evidence="1">Signal recognition particle protein</fullName>
        <ecNumber evidence="1">3.6.5.4</ecNumber>
    </recommendedName>
    <alternativeName>
        <fullName evidence="1">Fifty-four homolog</fullName>
    </alternativeName>
</protein>
<feature type="chain" id="PRO_0000101162" description="Signal recognition particle protein">
    <location>
        <begin position="1"/>
        <end position="521"/>
    </location>
</feature>
<feature type="region of interest" description="Disordered" evidence="2">
    <location>
        <begin position="436"/>
        <end position="505"/>
    </location>
</feature>
<feature type="compositionally biased region" description="Basic residues" evidence="2">
    <location>
        <begin position="447"/>
        <end position="462"/>
    </location>
</feature>
<feature type="binding site" evidence="1">
    <location>
        <begin position="107"/>
        <end position="114"/>
    </location>
    <ligand>
        <name>GTP</name>
        <dbReference type="ChEBI" id="CHEBI:37565"/>
    </ligand>
</feature>
<feature type="binding site" evidence="1">
    <location>
        <begin position="196"/>
        <end position="200"/>
    </location>
    <ligand>
        <name>GTP</name>
        <dbReference type="ChEBI" id="CHEBI:37565"/>
    </ligand>
</feature>
<feature type="binding site" evidence="1">
    <location>
        <begin position="254"/>
        <end position="257"/>
    </location>
    <ligand>
        <name>GTP</name>
        <dbReference type="ChEBI" id="CHEBI:37565"/>
    </ligand>
</feature>
<gene>
    <name evidence="1" type="primary">ffh</name>
    <name type="ordered locus">ML1622</name>
    <name type="ORF">MLCB250.20</name>
</gene>
<reference key="1">
    <citation type="journal article" date="2001" name="Nature">
        <title>Massive gene decay in the leprosy bacillus.</title>
        <authorList>
            <person name="Cole S.T."/>
            <person name="Eiglmeier K."/>
            <person name="Parkhill J."/>
            <person name="James K.D."/>
            <person name="Thomson N.R."/>
            <person name="Wheeler P.R."/>
            <person name="Honore N."/>
            <person name="Garnier T."/>
            <person name="Churcher C.M."/>
            <person name="Harris D.E."/>
            <person name="Mungall K.L."/>
            <person name="Basham D."/>
            <person name="Brown D."/>
            <person name="Chillingworth T."/>
            <person name="Connor R."/>
            <person name="Davies R.M."/>
            <person name="Devlin K."/>
            <person name="Duthoy S."/>
            <person name="Feltwell T."/>
            <person name="Fraser A."/>
            <person name="Hamlin N."/>
            <person name="Holroyd S."/>
            <person name="Hornsby T."/>
            <person name="Jagels K."/>
            <person name="Lacroix C."/>
            <person name="Maclean J."/>
            <person name="Moule S."/>
            <person name="Murphy L.D."/>
            <person name="Oliver K."/>
            <person name="Quail M.A."/>
            <person name="Rajandream M.A."/>
            <person name="Rutherford K.M."/>
            <person name="Rutter S."/>
            <person name="Seeger K."/>
            <person name="Simon S."/>
            <person name="Simmonds M."/>
            <person name="Skelton J."/>
            <person name="Squares R."/>
            <person name="Squares S."/>
            <person name="Stevens K."/>
            <person name="Taylor K."/>
            <person name="Whitehead S."/>
            <person name="Woodward J.R."/>
            <person name="Barrell B.G."/>
        </authorList>
    </citation>
    <scope>NUCLEOTIDE SEQUENCE [LARGE SCALE GENOMIC DNA]</scope>
    <source>
        <strain>TN</strain>
    </source>
</reference>
<keyword id="KW-0963">Cytoplasm</keyword>
<keyword id="KW-0342">GTP-binding</keyword>
<keyword id="KW-0378">Hydrolase</keyword>
<keyword id="KW-0547">Nucleotide-binding</keyword>
<keyword id="KW-1185">Reference proteome</keyword>
<keyword id="KW-0687">Ribonucleoprotein</keyword>
<keyword id="KW-0694">RNA-binding</keyword>
<keyword id="KW-0733">Signal recognition particle</keyword>
<comment type="function">
    <text evidence="1">Involved in targeting and insertion of nascent membrane proteins into the cytoplasmic membrane. Binds to the hydrophobic signal sequence of the ribosome-nascent chain (RNC) as it emerges from the ribosomes. The SRP-RNC complex is then targeted to the cytoplasmic membrane where it interacts with the SRP receptor FtsY.</text>
</comment>
<comment type="catalytic activity">
    <reaction evidence="1">
        <text>GTP + H2O = GDP + phosphate + H(+)</text>
        <dbReference type="Rhea" id="RHEA:19669"/>
        <dbReference type="ChEBI" id="CHEBI:15377"/>
        <dbReference type="ChEBI" id="CHEBI:15378"/>
        <dbReference type="ChEBI" id="CHEBI:37565"/>
        <dbReference type="ChEBI" id="CHEBI:43474"/>
        <dbReference type="ChEBI" id="CHEBI:58189"/>
        <dbReference type="EC" id="3.6.5.4"/>
    </reaction>
</comment>
<comment type="subunit">
    <text evidence="1">Part of the signal recognition particle protein translocation system, which is composed of SRP and FtsY.</text>
</comment>
<comment type="subcellular location">
    <subcellularLocation>
        <location evidence="1">Cytoplasm</location>
    </subcellularLocation>
    <text evidence="1">The SRP-RNC complex is targeted to the cytoplasmic membrane.</text>
</comment>
<comment type="domain">
    <text evidence="1">Composed of three domains: the N-terminal N domain, which is responsible for interactions with the ribosome, the central G domain, which binds GTP, and the C-terminal M domain, which binds the RNA and the signal sequence of the RNC.</text>
</comment>
<comment type="similarity">
    <text evidence="1">Belongs to the GTP-binding SRP family. SRP54 subfamily.</text>
</comment>
<dbReference type="EC" id="3.6.5.4" evidence="1"/>
<dbReference type="EMBL" id="Z97369">
    <property type="protein sequence ID" value="CAB10614.1"/>
    <property type="molecule type" value="Genomic_DNA"/>
</dbReference>
<dbReference type="EMBL" id="AL583922">
    <property type="protein sequence ID" value="CAC30573.1"/>
    <property type="molecule type" value="Genomic_DNA"/>
</dbReference>
<dbReference type="PIR" id="H87111">
    <property type="entry name" value="H87111"/>
</dbReference>
<dbReference type="RefSeq" id="NP_302117.1">
    <property type="nucleotide sequence ID" value="NC_002677.1"/>
</dbReference>
<dbReference type="RefSeq" id="WP_010908438.1">
    <property type="nucleotide sequence ID" value="NC_002677.1"/>
</dbReference>
<dbReference type="SMR" id="O33013"/>
<dbReference type="STRING" id="272631.gene:17575463"/>
<dbReference type="KEGG" id="mle:ML1622"/>
<dbReference type="PATRIC" id="fig|272631.5.peg.3057"/>
<dbReference type="Leproma" id="ML1622"/>
<dbReference type="eggNOG" id="COG0541">
    <property type="taxonomic scope" value="Bacteria"/>
</dbReference>
<dbReference type="HOGENOM" id="CLU_009301_6_0_11"/>
<dbReference type="OrthoDB" id="9804720at2"/>
<dbReference type="Proteomes" id="UP000000806">
    <property type="component" value="Chromosome"/>
</dbReference>
<dbReference type="GO" id="GO:0048500">
    <property type="term" value="C:signal recognition particle"/>
    <property type="evidence" value="ECO:0007669"/>
    <property type="project" value="UniProtKB-UniRule"/>
</dbReference>
<dbReference type="GO" id="GO:0008312">
    <property type="term" value="F:7S RNA binding"/>
    <property type="evidence" value="ECO:0007669"/>
    <property type="project" value="InterPro"/>
</dbReference>
<dbReference type="GO" id="GO:0016887">
    <property type="term" value="F:ATP hydrolysis activity"/>
    <property type="evidence" value="ECO:0007669"/>
    <property type="project" value="InterPro"/>
</dbReference>
<dbReference type="GO" id="GO:0005525">
    <property type="term" value="F:GTP binding"/>
    <property type="evidence" value="ECO:0007669"/>
    <property type="project" value="UniProtKB-UniRule"/>
</dbReference>
<dbReference type="GO" id="GO:0003924">
    <property type="term" value="F:GTPase activity"/>
    <property type="evidence" value="ECO:0007669"/>
    <property type="project" value="UniProtKB-UniRule"/>
</dbReference>
<dbReference type="GO" id="GO:0006614">
    <property type="term" value="P:SRP-dependent cotranslational protein targeting to membrane"/>
    <property type="evidence" value="ECO:0007669"/>
    <property type="project" value="InterPro"/>
</dbReference>
<dbReference type="CDD" id="cd18539">
    <property type="entry name" value="SRP_G"/>
    <property type="match status" value="1"/>
</dbReference>
<dbReference type="FunFam" id="3.40.50.300:FF:000022">
    <property type="entry name" value="Signal recognition particle 54 kDa subunit"/>
    <property type="match status" value="1"/>
</dbReference>
<dbReference type="Gene3D" id="3.40.50.300">
    <property type="entry name" value="P-loop containing nucleotide triphosphate hydrolases"/>
    <property type="match status" value="1"/>
</dbReference>
<dbReference type="Gene3D" id="1.20.120.140">
    <property type="entry name" value="Signal recognition particle SRP54, nucleotide-binding domain"/>
    <property type="match status" value="1"/>
</dbReference>
<dbReference type="Gene3D" id="1.10.260.30">
    <property type="entry name" value="Signal recognition particle, SRP54 subunit, M-domain"/>
    <property type="match status" value="1"/>
</dbReference>
<dbReference type="HAMAP" id="MF_00306">
    <property type="entry name" value="SRP54"/>
    <property type="match status" value="1"/>
</dbReference>
<dbReference type="InterPro" id="IPR003593">
    <property type="entry name" value="AAA+_ATPase"/>
</dbReference>
<dbReference type="InterPro" id="IPR027417">
    <property type="entry name" value="P-loop_NTPase"/>
</dbReference>
<dbReference type="InterPro" id="IPR036891">
    <property type="entry name" value="Signal_recog_part_SRP54_M_sf"/>
</dbReference>
<dbReference type="InterPro" id="IPR013822">
    <property type="entry name" value="Signal_recog_particl_SRP54_hlx"/>
</dbReference>
<dbReference type="InterPro" id="IPR004125">
    <property type="entry name" value="Signal_recog_particle_SRP54_M"/>
</dbReference>
<dbReference type="InterPro" id="IPR004780">
    <property type="entry name" value="SRP"/>
</dbReference>
<dbReference type="InterPro" id="IPR022941">
    <property type="entry name" value="SRP54"/>
</dbReference>
<dbReference type="InterPro" id="IPR000897">
    <property type="entry name" value="SRP54_GTPase_dom"/>
</dbReference>
<dbReference type="InterPro" id="IPR042101">
    <property type="entry name" value="SRP54_N_sf"/>
</dbReference>
<dbReference type="NCBIfam" id="TIGR00959">
    <property type="entry name" value="ffh"/>
    <property type="match status" value="1"/>
</dbReference>
<dbReference type="PANTHER" id="PTHR11564">
    <property type="entry name" value="SIGNAL RECOGNITION PARTICLE 54K PROTEIN SRP54"/>
    <property type="match status" value="1"/>
</dbReference>
<dbReference type="PANTHER" id="PTHR11564:SF5">
    <property type="entry name" value="SIGNAL RECOGNITION PARTICLE SUBUNIT SRP54"/>
    <property type="match status" value="1"/>
</dbReference>
<dbReference type="Pfam" id="PF00448">
    <property type="entry name" value="SRP54"/>
    <property type="match status" value="1"/>
</dbReference>
<dbReference type="Pfam" id="PF02881">
    <property type="entry name" value="SRP54_N"/>
    <property type="match status" value="1"/>
</dbReference>
<dbReference type="Pfam" id="PF02978">
    <property type="entry name" value="SRP_SPB"/>
    <property type="match status" value="1"/>
</dbReference>
<dbReference type="SMART" id="SM00382">
    <property type="entry name" value="AAA"/>
    <property type="match status" value="1"/>
</dbReference>
<dbReference type="SMART" id="SM00962">
    <property type="entry name" value="SRP54"/>
    <property type="match status" value="1"/>
</dbReference>
<dbReference type="SMART" id="SM00963">
    <property type="entry name" value="SRP54_N"/>
    <property type="match status" value="1"/>
</dbReference>
<dbReference type="SUPFAM" id="SSF52540">
    <property type="entry name" value="P-loop containing nucleoside triphosphate hydrolases"/>
    <property type="match status" value="1"/>
</dbReference>
<dbReference type="SUPFAM" id="SSF47446">
    <property type="entry name" value="Signal peptide-binding domain"/>
    <property type="match status" value="1"/>
</dbReference>
<organism>
    <name type="scientific">Mycobacterium leprae (strain TN)</name>
    <dbReference type="NCBI Taxonomy" id="272631"/>
    <lineage>
        <taxon>Bacteria</taxon>
        <taxon>Bacillati</taxon>
        <taxon>Actinomycetota</taxon>
        <taxon>Actinomycetes</taxon>
        <taxon>Mycobacteriales</taxon>
        <taxon>Mycobacteriaceae</taxon>
        <taxon>Mycobacterium</taxon>
    </lineage>
</organism>
<accession>O33013</accession>
<name>SRP54_MYCLE</name>
<proteinExistence type="inferred from homology"/>
<sequence>MFESLSNRLTGVIQGLRGKGRLTDADIEATTREIRLALFEADVSLPVVRAFVHRIKERARGTEVSAALNPAQQIVKIVNEELIGILGGETRQLAFAKTPPTVVMLAGLQGSGKTTLAGKLAVRLRRQGHTPLLVACDLQRPAAVNQLQVVGERAGVPVFAPHPGASPDSGPGDPVAVASAGLVEARAKHFDVVIVDTAGRLGIDDELMAQAGAIREAINPDEVLFVLDAMIGQDAVTTAAAFGAGVGFTGVVLTKLDGDARGGAALSVREVTGVPILFATTGEKLDDFDVFHPDRMASRILGMGDVLSLIEQAEQVFDAEQAEAAAAKIVAGELTLEDFLEQMLAVRKMGLIGNLLGMLPGAGQVKEVLEQVDDKQLDRLQAIIRGMTPQERADPKIINASRRLRIANGSGVTVSEVNQLVDRFFEARKMMSSVLGGMGIPGMGRKSATRKSKGGKGKKRARGPTSPKVRSPFGPARPGMPDMMNMPPSFPDLSQMPDGLNELPPGLAAFDLSKLKFPGKT</sequence>
<evidence type="ECO:0000255" key="1">
    <source>
        <dbReference type="HAMAP-Rule" id="MF_00306"/>
    </source>
</evidence>
<evidence type="ECO:0000256" key="2">
    <source>
        <dbReference type="SAM" id="MobiDB-lite"/>
    </source>
</evidence>